<name>MCH_METS4</name>
<gene>
    <name evidence="1" type="primary">mch</name>
    <name type="ordered locus">M446_5780</name>
</gene>
<reference key="1">
    <citation type="submission" date="2008-02" db="EMBL/GenBank/DDBJ databases">
        <title>Complete sequence of chromosome of Methylobacterium sp. 4-46.</title>
        <authorList>
            <consortium name="US DOE Joint Genome Institute"/>
            <person name="Copeland A."/>
            <person name="Lucas S."/>
            <person name="Lapidus A."/>
            <person name="Glavina del Rio T."/>
            <person name="Dalin E."/>
            <person name="Tice H."/>
            <person name="Bruce D."/>
            <person name="Goodwin L."/>
            <person name="Pitluck S."/>
            <person name="Chertkov O."/>
            <person name="Brettin T."/>
            <person name="Detter J.C."/>
            <person name="Han C."/>
            <person name="Kuske C.R."/>
            <person name="Schmutz J."/>
            <person name="Larimer F."/>
            <person name="Land M."/>
            <person name="Hauser L."/>
            <person name="Kyrpides N."/>
            <person name="Ivanova N."/>
            <person name="Marx C.J."/>
            <person name="Richardson P."/>
        </authorList>
    </citation>
    <scope>NUCLEOTIDE SEQUENCE [LARGE SCALE GENOMIC DNA]</scope>
    <source>
        <strain>4-46</strain>
    </source>
</reference>
<organism>
    <name type="scientific">Methylobacterium sp. (strain 4-46)</name>
    <dbReference type="NCBI Taxonomy" id="426117"/>
    <lineage>
        <taxon>Bacteria</taxon>
        <taxon>Pseudomonadati</taxon>
        <taxon>Pseudomonadota</taxon>
        <taxon>Alphaproteobacteria</taxon>
        <taxon>Hyphomicrobiales</taxon>
        <taxon>Methylobacteriaceae</taxon>
        <taxon>Methylobacterium</taxon>
    </lineage>
</organism>
<dbReference type="EC" id="3.5.4.27" evidence="1"/>
<dbReference type="EMBL" id="CP000943">
    <property type="protein sequence ID" value="ACA20068.1"/>
    <property type="molecule type" value="Genomic_DNA"/>
</dbReference>
<dbReference type="RefSeq" id="WP_012335446.1">
    <property type="nucleotide sequence ID" value="NC_010511.1"/>
</dbReference>
<dbReference type="SMR" id="B0UF36"/>
<dbReference type="STRING" id="426117.M446_5780"/>
<dbReference type="KEGG" id="met:M446_5780"/>
<dbReference type="eggNOG" id="COG3252">
    <property type="taxonomic scope" value="Bacteria"/>
</dbReference>
<dbReference type="HOGENOM" id="CLU_876031_0_0_5"/>
<dbReference type="UniPathway" id="UPA00562">
    <property type="reaction ID" value="UER00703"/>
</dbReference>
<dbReference type="GO" id="GO:0005737">
    <property type="term" value="C:cytoplasm"/>
    <property type="evidence" value="ECO:0007669"/>
    <property type="project" value="UniProtKB-SubCell"/>
</dbReference>
<dbReference type="GO" id="GO:0018759">
    <property type="term" value="F:methenyltetrahydromethanopterin cyclohydrolase activity"/>
    <property type="evidence" value="ECO:0007669"/>
    <property type="project" value="UniProtKB-UniRule"/>
</dbReference>
<dbReference type="GO" id="GO:0046294">
    <property type="term" value="P:formaldehyde catabolic process"/>
    <property type="evidence" value="ECO:0007669"/>
    <property type="project" value="UniProtKB-UniRule"/>
</dbReference>
<dbReference type="GO" id="GO:0006730">
    <property type="term" value="P:one-carbon metabolic process"/>
    <property type="evidence" value="ECO:0007669"/>
    <property type="project" value="UniProtKB-UniRule"/>
</dbReference>
<dbReference type="CDD" id="cd00545">
    <property type="entry name" value="MCH"/>
    <property type="match status" value="1"/>
</dbReference>
<dbReference type="Gene3D" id="3.10.340.11">
    <property type="entry name" value="Methenyltetrahydromethanopterin Cyclohydrolase, Chain A, domain 1"/>
    <property type="match status" value="1"/>
</dbReference>
<dbReference type="Gene3D" id="3.30.1030.10">
    <property type="entry name" value="Methenyltetrahydromethanopterin Cyclohydrolase, Chain A, domain 2"/>
    <property type="match status" value="1"/>
</dbReference>
<dbReference type="HAMAP" id="MF_00486">
    <property type="entry name" value="McH"/>
    <property type="match status" value="1"/>
</dbReference>
<dbReference type="InterPro" id="IPR003209">
    <property type="entry name" value="METHMP_CycHdrlase"/>
</dbReference>
<dbReference type="NCBIfam" id="TIGR03120">
    <property type="entry name" value="one_C_mch"/>
    <property type="match status" value="1"/>
</dbReference>
<dbReference type="Pfam" id="PF02289">
    <property type="entry name" value="MCH"/>
    <property type="match status" value="1"/>
</dbReference>
<dbReference type="SUPFAM" id="SSF56199">
    <property type="entry name" value="Methenyltetrahydromethanopterin cyclohydrolase"/>
    <property type="match status" value="1"/>
</dbReference>
<sequence length="324" mass="33203">MSSTTVRPSVNALATPLVEALVADAAKLRLSVSAKSGEARLVDAGAQARGSIEAGRRIAEICLGGLGTVTIAPAGPVAAWPVTVTVHSADPVLACLGSQYAGWSLADEGGSSGFFALGSGPGRAAAAAEHLFEELHYRDHAAQIALVLESASAPPASVVAKVAEAAGVTPDAVTFIYAPTQSLAGATQVVARVLEVALHKAHSVGFDLAKVVDGIGAAPLSPPHPDFIQAMGRTNDAIIYGGRVQLFVEADDAEARGLAEALPSTTSRDHGAPFAEIFARFNGDFYAIDKHLFSPAEVVVTSLLSGTSHRAGRLVPELVERSFA</sequence>
<comment type="function">
    <text evidence="1">Catalyzes the hydrolysis of methenyl-H(4)MPT(+) to 5-formyl-H(4)MPT.</text>
</comment>
<comment type="catalytic activity">
    <reaction evidence="1">
        <text>5,10-methenyl-5,6,7,8-tetrahydromethanopterin + H2O = N(5)-formyl-5,6,7,8-tetrahydromethanopterin + H(+)</text>
        <dbReference type="Rhea" id="RHEA:19053"/>
        <dbReference type="ChEBI" id="CHEBI:15377"/>
        <dbReference type="ChEBI" id="CHEBI:15378"/>
        <dbReference type="ChEBI" id="CHEBI:58018"/>
        <dbReference type="ChEBI" id="CHEBI:58337"/>
        <dbReference type="EC" id="3.5.4.27"/>
    </reaction>
</comment>
<comment type="pathway">
    <text evidence="1">One-carbon metabolism; formaldehyde degradation; formate from formaldehyde (H(4)MPT route): step 3/5.</text>
</comment>
<comment type="subcellular location">
    <subcellularLocation>
        <location evidence="1">Cytoplasm</location>
    </subcellularLocation>
</comment>
<comment type="similarity">
    <text evidence="1">Belongs to the MCH family.</text>
</comment>
<feature type="chain" id="PRO_1000191113" description="Methenyltetrahydromethanopterin cyclohydrolase">
    <location>
        <begin position="1"/>
        <end position="324"/>
    </location>
</feature>
<keyword id="KW-0963">Cytoplasm</keyword>
<keyword id="KW-0378">Hydrolase</keyword>
<keyword id="KW-0554">One-carbon metabolism</keyword>
<evidence type="ECO:0000255" key="1">
    <source>
        <dbReference type="HAMAP-Rule" id="MF_00486"/>
    </source>
</evidence>
<accession>B0UF36</accession>
<protein>
    <recommendedName>
        <fullName evidence="1">Methenyltetrahydromethanopterin cyclohydrolase</fullName>
        <ecNumber evidence="1">3.5.4.27</ecNumber>
    </recommendedName>
    <alternativeName>
        <fullName evidence="1">Methenyl-H4MPT cyclohydrolase</fullName>
    </alternativeName>
</protein>
<proteinExistence type="inferred from homology"/>